<accession>A1DMJ3</accession>
<gene>
    <name type="primary">creD</name>
    <name type="ORF">NFIA_053600</name>
</gene>
<evidence type="ECO:0000250" key="1"/>
<evidence type="ECO:0000256" key="2">
    <source>
        <dbReference type="SAM" id="MobiDB-lite"/>
    </source>
</evidence>
<evidence type="ECO:0000305" key="3"/>
<protein>
    <recommendedName>
        <fullName>Probable HECT-type ubiquitin ligase-interacting protein creD</fullName>
    </recommendedName>
    <alternativeName>
        <fullName>Carbon catabolite repressor D</fullName>
    </alternativeName>
</protein>
<feature type="chain" id="PRO_0000395702" description="Probable HECT-type ubiquitin ligase-interacting protein creD">
    <location>
        <begin position="1"/>
        <end position="601"/>
    </location>
</feature>
<feature type="region of interest" description="Disordered" evidence="2">
    <location>
        <begin position="374"/>
        <end position="397"/>
    </location>
</feature>
<feature type="region of interest" description="Disordered" evidence="2">
    <location>
        <begin position="455"/>
        <end position="489"/>
    </location>
</feature>
<feature type="compositionally biased region" description="Low complexity" evidence="2">
    <location>
        <begin position="461"/>
        <end position="473"/>
    </location>
</feature>
<feature type="compositionally biased region" description="Basic and acidic residues" evidence="2">
    <location>
        <begin position="475"/>
        <end position="489"/>
    </location>
</feature>
<sequence length="601" mass="66372">MALSFFGGGGASHLKYFDIRLDEDYIVFRGGEQEAASAQLSGKLLLCLSEPLSAKHVRLNLTGISRVCWHLPSSSASGGRKSWREKVFYEKSWTFRDAGKSKTEILAAGNYEFPFHVILEGSMPESVEGLSDTYVTYRFKAEIGRKYAKDIVVRKPLRIIRTLDSSALELSHAMSVENIWPNKIEYSISTPTKAVIFGTSIRVDFKLIPLLKGLKIGQIVSQLIESHDLTLNPEDPDSVRNTYKNTRTIVNDEHELDEENNLEIIDEAAEGYQFSRFLDLPKTLTRCLQDTDTRGIKIRHKLKFRVQLLNPDGHISELRATLPVSIFISPNLAIDDNNNLVDQTPQSAQRAVNDLAQQAPPLYGEHQFDQLYSEVDPSGYRTPGPGSGPGTPFGTLSRNLSAENLASMNALTNTDISASALHSRLSNLHASRFSNPSPADTDGHTDVEHRRLGVSADYFGPSSGSNSHSPASPELSRRPSDEGYHDHDHIPSGMATPFHPQFAEVESLSRVPSYSTAVRSTVGPCDSELPDYQAVVAEDTAMPTLQSPQQAHIRSAGRGASTGHTGIDVHHLRSGLFNSRTSAHHDDDDRRLRLVQARARV</sequence>
<proteinExistence type="inferred from homology"/>
<dbReference type="EMBL" id="DS027698">
    <property type="protein sequence ID" value="EAW16014.1"/>
    <property type="molecule type" value="Genomic_DNA"/>
</dbReference>
<dbReference type="RefSeq" id="XP_001257911.1">
    <property type="nucleotide sequence ID" value="XM_001257910.1"/>
</dbReference>
<dbReference type="SMR" id="A1DMJ3"/>
<dbReference type="STRING" id="331117.A1DMJ3"/>
<dbReference type="EnsemblFungi" id="EAW16014">
    <property type="protein sequence ID" value="EAW16014"/>
    <property type="gene ID" value="NFIA_053600"/>
</dbReference>
<dbReference type="GeneID" id="4584426"/>
<dbReference type="KEGG" id="nfi:NFIA_053600"/>
<dbReference type="VEuPathDB" id="FungiDB:NFIA_053600"/>
<dbReference type="eggNOG" id="KOG3780">
    <property type="taxonomic scope" value="Eukaryota"/>
</dbReference>
<dbReference type="HOGENOM" id="CLU_018982_2_0_1"/>
<dbReference type="OMA" id="GMATPFH"/>
<dbReference type="OrthoDB" id="2333384at2759"/>
<dbReference type="Proteomes" id="UP000006702">
    <property type="component" value="Unassembled WGS sequence"/>
</dbReference>
<dbReference type="GO" id="GO:0005829">
    <property type="term" value="C:cytosol"/>
    <property type="evidence" value="ECO:0007669"/>
    <property type="project" value="TreeGrafter"/>
</dbReference>
<dbReference type="GO" id="GO:0005886">
    <property type="term" value="C:plasma membrane"/>
    <property type="evidence" value="ECO:0007669"/>
    <property type="project" value="TreeGrafter"/>
</dbReference>
<dbReference type="GO" id="GO:0030674">
    <property type="term" value="F:protein-macromolecule adaptor activity"/>
    <property type="evidence" value="ECO:0007669"/>
    <property type="project" value="TreeGrafter"/>
</dbReference>
<dbReference type="GO" id="GO:0031625">
    <property type="term" value="F:ubiquitin protein ligase binding"/>
    <property type="evidence" value="ECO:0007669"/>
    <property type="project" value="TreeGrafter"/>
</dbReference>
<dbReference type="GO" id="GO:0031396">
    <property type="term" value="P:regulation of protein ubiquitination"/>
    <property type="evidence" value="ECO:0000250"/>
    <property type="project" value="UniProtKB"/>
</dbReference>
<dbReference type="GO" id="GO:0070086">
    <property type="term" value="P:ubiquitin-dependent endocytosis"/>
    <property type="evidence" value="ECO:0007669"/>
    <property type="project" value="TreeGrafter"/>
</dbReference>
<dbReference type="FunFam" id="2.60.40.640:FF:000018">
    <property type="entry name" value="HECT-type ubiquitin ligase-interacting protein creD"/>
    <property type="match status" value="1"/>
</dbReference>
<dbReference type="Gene3D" id="2.60.40.640">
    <property type="match status" value="1"/>
</dbReference>
<dbReference type="InterPro" id="IPR014752">
    <property type="entry name" value="Arrestin-like_C"/>
</dbReference>
<dbReference type="InterPro" id="IPR011021">
    <property type="entry name" value="Arrestin-like_N"/>
</dbReference>
<dbReference type="InterPro" id="IPR011022">
    <property type="entry name" value="Arrestin_C-like"/>
</dbReference>
<dbReference type="InterPro" id="IPR050357">
    <property type="entry name" value="Arrestin_domain-protein"/>
</dbReference>
<dbReference type="InterPro" id="IPR014756">
    <property type="entry name" value="Ig_E-set"/>
</dbReference>
<dbReference type="PANTHER" id="PTHR11188">
    <property type="entry name" value="ARRESTIN DOMAIN CONTAINING PROTEIN"/>
    <property type="match status" value="1"/>
</dbReference>
<dbReference type="PANTHER" id="PTHR11188:SF17">
    <property type="entry name" value="FI21816P1"/>
    <property type="match status" value="1"/>
</dbReference>
<dbReference type="Pfam" id="PF02752">
    <property type="entry name" value="Arrestin_C"/>
    <property type="match status" value="1"/>
</dbReference>
<dbReference type="Pfam" id="PF00339">
    <property type="entry name" value="Arrestin_N"/>
    <property type="match status" value="1"/>
</dbReference>
<dbReference type="SMART" id="SM01017">
    <property type="entry name" value="Arrestin_C"/>
    <property type="match status" value="1"/>
</dbReference>
<dbReference type="SUPFAM" id="SSF81296">
    <property type="entry name" value="E set domains"/>
    <property type="match status" value="1"/>
</dbReference>
<comment type="function">
    <text evidence="1">Component of the regulatory network controlling carbon source utilization through ubiquitination and deubiquitination involving creA, creB, creC, creD and acrB. May be involved in signaling by recognizing appropriately phosphorylated substrates via its arrestin domains and then recruit a HECT-type ubiquitin ligase such as hulA, leading to ubiquitination of the substrate, providing a link between ubiquitination and phosphorylation in protein regulation and stability (By similarity).</text>
</comment>
<comment type="subunit">
    <text evidence="1">Interacts with hulA.</text>
</comment>
<comment type="similarity">
    <text evidence="3">Belongs to the arrestin family.</text>
</comment>
<organism>
    <name type="scientific">Neosartorya fischeri (strain ATCC 1020 / DSM 3700 / CBS 544.65 / FGSC A1164 / JCM 1740 / NRRL 181 / WB 181)</name>
    <name type="common">Aspergillus fischerianus</name>
    <dbReference type="NCBI Taxonomy" id="331117"/>
    <lineage>
        <taxon>Eukaryota</taxon>
        <taxon>Fungi</taxon>
        <taxon>Dikarya</taxon>
        <taxon>Ascomycota</taxon>
        <taxon>Pezizomycotina</taxon>
        <taxon>Eurotiomycetes</taxon>
        <taxon>Eurotiomycetidae</taxon>
        <taxon>Eurotiales</taxon>
        <taxon>Aspergillaceae</taxon>
        <taxon>Aspergillus</taxon>
        <taxon>Aspergillus subgen. Fumigati</taxon>
    </lineage>
</organism>
<reference key="1">
    <citation type="journal article" date="2008" name="PLoS Genet.">
        <title>Genomic islands in the pathogenic filamentous fungus Aspergillus fumigatus.</title>
        <authorList>
            <person name="Fedorova N.D."/>
            <person name="Khaldi N."/>
            <person name="Joardar V.S."/>
            <person name="Maiti R."/>
            <person name="Amedeo P."/>
            <person name="Anderson M.J."/>
            <person name="Crabtree J."/>
            <person name="Silva J.C."/>
            <person name="Badger J.H."/>
            <person name="Albarraq A."/>
            <person name="Angiuoli S."/>
            <person name="Bussey H."/>
            <person name="Bowyer P."/>
            <person name="Cotty P.J."/>
            <person name="Dyer P.S."/>
            <person name="Egan A."/>
            <person name="Galens K."/>
            <person name="Fraser-Liggett C.M."/>
            <person name="Haas B.J."/>
            <person name="Inman J.M."/>
            <person name="Kent R."/>
            <person name="Lemieux S."/>
            <person name="Malavazi I."/>
            <person name="Orvis J."/>
            <person name="Roemer T."/>
            <person name="Ronning C.M."/>
            <person name="Sundaram J.P."/>
            <person name="Sutton G."/>
            <person name="Turner G."/>
            <person name="Venter J.C."/>
            <person name="White O.R."/>
            <person name="Whitty B.R."/>
            <person name="Youngman P."/>
            <person name="Wolfe K.H."/>
            <person name="Goldman G.H."/>
            <person name="Wortman J.R."/>
            <person name="Jiang B."/>
            <person name="Denning D.W."/>
            <person name="Nierman W.C."/>
        </authorList>
    </citation>
    <scope>NUCLEOTIDE SEQUENCE [LARGE SCALE GENOMIC DNA]</scope>
    <source>
        <strain>ATCC 1020 / DSM 3700 / CBS 544.65 / FGSC A1164 / JCM 1740 / NRRL 181 / WB 181</strain>
    </source>
</reference>
<name>CRED_NEOFI</name>
<keyword id="KW-1185">Reference proteome</keyword>
<keyword id="KW-0833">Ubl conjugation pathway</keyword>